<gene>
    <name evidence="1" type="primary">arnF</name>
    <name type="ordered locus">SeHA_C2543</name>
</gene>
<protein>
    <recommendedName>
        <fullName evidence="1">Probable 4-amino-4-deoxy-L-arabinose-phosphoundecaprenol flippase subunit ArnF</fullName>
        <shortName evidence="1">L-Ara4N-phosphoundecaprenol flippase subunit ArnF</shortName>
    </recommendedName>
    <alternativeName>
        <fullName evidence="1">Undecaprenyl phosphate-aminoarabinose flippase subunit ArnF</fullName>
    </alternativeName>
</protein>
<comment type="function">
    <text evidence="1">Translocates 4-amino-4-deoxy-L-arabinose-phosphoundecaprenol (alpha-L-Ara4N-phosphoundecaprenol) from the cytoplasmic to the periplasmic side of the inner membrane.</text>
</comment>
<comment type="pathway">
    <text evidence="1">Bacterial outer membrane biogenesis; lipopolysaccharide biosynthesis.</text>
</comment>
<comment type="subunit">
    <text evidence="1">Heterodimer of ArnE and ArnF.</text>
</comment>
<comment type="subcellular location">
    <subcellularLocation>
        <location evidence="1">Cell inner membrane</location>
        <topology evidence="1">Multi-pass membrane protein</topology>
    </subcellularLocation>
</comment>
<comment type="similarity">
    <text evidence="1">Belongs to the ArnF family.</text>
</comment>
<accession>B4TBH0</accession>
<keyword id="KW-0997">Cell inner membrane</keyword>
<keyword id="KW-1003">Cell membrane</keyword>
<keyword id="KW-0441">Lipid A biosynthesis</keyword>
<keyword id="KW-0444">Lipid biosynthesis</keyword>
<keyword id="KW-0443">Lipid metabolism</keyword>
<keyword id="KW-0448">Lipopolysaccharide biosynthesis</keyword>
<keyword id="KW-0472">Membrane</keyword>
<keyword id="KW-0812">Transmembrane</keyword>
<keyword id="KW-1133">Transmembrane helix</keyword>
<keyword id="KW-0813">Transport</keyword>
<name>ARNF_SALHS</name>
<sequence length="125" mass="13096">MGVMWGLISVAIASLAQLSLGFAMMRLPSIAHPLAFISGLGALNAATLALFAGLAGYLVSVFCWHKTLHTLALSKAYALLSLSYVLVWVASMLLPGLQGAFSLKAMLGVLCIMAGVMLIFLPARS</sequence>
<proteinExistence type="inferred from homology"/>
<reference key="1">
    <citation type="journal article" date="2011" name="J. Bacteriol.">
        <title>Comparative genomics of 28 Salmonella enterica isolates: evidence for CRISPR-mediated adaptive sublineage evolution.</title>
        <authorList>
            <person name="Fricke W.F."/>
            <person name="Mammel M.K."/>
            <person name="McDermott P.F."/>
            <person name="Tartera C."/>
            <person name="White D.G."/>
            <person name="Leclerc J.E."/>
            <person name="Ravel J."/>
            <person name="Cebula T.A."/>
        </authorList>
    </citation>
    <scope>NUCLEOTIDE SEQUENCE [LARGE SCALE GENOMIC DNA]</scope>
    <source>
        <strain>SL476</strain>
    </source>
</reference>
<organism>
    <name type="scientific">Salmonella heidelberg (strain SL476)</name>
    <dbReference type="NCBI Taxonomy" id="454169"/>
    <lineage>
        <taxon>Bacteria</taxon>
        <taxon>Pseudomonadati</taxon>
        <taxon>Pseudomonadota</taxon>
        <taxon>Gammaproteobacteria</taxon>
        <taxon>Enterobacterales</taxon>
        <taxon>Enterobacteriaceae</taxon>
        <taxon>Salmonella</taxon>
    </lineage>
</organism>
<evidence type="ECO:0000255" key="1">
    <source>
        <dbReference type="HAMAP-Rule" id="MF_00538"/>
    </source>
</evidence>
<feature type="chain" id="PRO_1000128668" description="Probable 4-amino-4-deoxy-L-arabinose-phosphoundecaprenol flippase subunit ArnF">
    <location>
        <begin position="1"/>
        <end position="125"/>
    </location>
</feature>
<feature type="topological domain" description="Cytoplasmic" evidence="1">
    <location>
        <begin position="1"/>
        <end position="2"/>
    </location>
</feature>
<feature type="transmembrane region" description="Helical" evidence="1">
    <location>
        <begin position="3"/>
        <end position="23"/>
    </location>
</feature>
<feature type="topological domain" description="Periplasmic" evidence="1">
    <location>
        <begin position="24"/>
        <end position="33"/>
    </location>
</feature>
<feature type="transmembrane region" description="Helical" evidence="1">
    <location>
        <begin position="34"/>
        <end position="54"/>
    </location>
</feature>
<feature type="topological domain" description="Cytoplasmic" evidence="1">
    <location>
        <begin position="55"/>
        <end position="76"/>
    </location>
</feature>
<feature type="transmembrane region" description="Helical" evidence="1">
    <location>
        <begin position="77"/>
        <end position="97"/>
    </location>
</feature>
<feature type="topological domain" description="Periplasmic" evidence="1">
    <location>
        <begin position="98"/>
        <end position="100"/>
    </location>
</feature>
<feature type="transmembrane region" description="Helical" evidence="1">
    <location>
        <begin position="101"/>
        <end position="121"/>
    </location>
</feature>
<feature type="topological domain" description="Cytoplasmic" evidence="1">
    <location>
        <begin position="122"/>
        <end position="125"/>
    </location>
</feature>
<dbReference type="EMBL" id="CP001120">
    <property type="protein sequence ID" value="ACF70334.1"/>
    <property type="molecule type" value="Genomic_DNA"/>
</dbReference>
<dbReference type="RefSeq" id="WP_000538696.1">
    <property type="nucleotide sequence ID" value="NC_011083.1"/>
</dbReference>
<dbReference type="KEGG" id="seh:SeHA_C2543"/>
<dbReference type="HOGENOM" id="CLU_131462_1_0_6"/>
<dbReference type="UniPathway" id="UPA00030"/>
<dbReference type="Proteomes" id="UP000001866">
    <property type="component" value="Chromosome"/>
</dbReference>
<dbReference type="GO" id="GO:0005886">
    <property type="term" value="C:plasma membrane"/>
    <property type="evidence" value="ECO:0007669"/>
    <property type="project" value="UniProtKB-SubCell"/>
</dbReference>
<dbReference type="GO" id="GO:1901505">
    <property type="term" value="F:carbohydrate derivative transmembrane transporter activity"/>
    <property type="evidence" value="ECO:0007669"/>
    <property type="project" value="InterPro"/>
</dbReference>
<dbReference type="GO" id="GO:0009245">
    <property type="term" value="P:lipid A biosynthetic process"/>
    <property type="evidence" value="ECO:0007669"/>
    <property type="project" value="UniProtKB-UniRule"/>
</dbReference>
<dbReference type="GO" id="GO:0009103">
    <property type="term" value="P:lipopolysaccharide biosynthetic process"/>
    <property type="evidence" value="ECO:0007669"/>
    <property type="project" value="UniProtKB-UniRule"/>
</dbReference>
<dbReference type="Gene3D" id="1.10.3730.20">
    <property type="match status" value="1"/>
</dbReference>
<dbReference type="HAMAP" id="MF_00538">
    <property type="entry name" value="Flippase_ArnF"/>
    <property type="match status" value="1"/>
</dbReference>
<dbReference type="InterPro" id="IPR022832">
    <property type="entry name" value="Flippase_ArnF"/>
</dbReference>
<dbReference type="InterPro" id="IPR000390">
    <property type="entry name" value="Small_drug/metabolite_transptr"/>
</dbReference>
<dbReference type="NCBIfam" id="NF002816">
    <property type="entry name" value="PRK02971.1-2"/>
    <property type="match status" value="1"/>
</dbReference>
<dbReference type="PANTHER" id="PTHR30561:SF9">
    <property type="entry name" value="4-AMINO-4-DEOXY-L-ARABINOSE-PHOSPHOUNDECAPRENOL FLIPPASE SUBUNIT ARNF-RELATED"/>
    <property type="match status" value="1"/>
</dbReference>
<dbReference type="PANTHER" id="PTHR30561">
    <property type="entry name" value="SMR FAMILY PROTON-DEPENDENT DRUG EFFLUX TRANSPORTER SUGE"/>
    <property type="match status" value="1"/>
</dbReference>